<reference key="1">
    <citation type="journal article" date="1995" name="Microbiology">
        <title>Discovery of a ptsHI operon, which includes a third gene (ptsT), in the thermophile Bacillus stearothermophilus.</title>
        <authorList>
            <person name="Lai X."/>
            <person name="Ingram L.O."/>
        </authorList>
    </citation>
    <scope>NUCLEOTIDE SEQUENCE [GENOMIC DNA]</scope>
    <source>
        <strain>XL-65-6</strain>
    </source>
</reference>
<evidence type="ECO:0000250" key="1"/>
<evidence type="ECO:0000255" key="2"/>
<evidence type="ECO:0000256" key="3">
    <source>
        <dbReference type="SAM" id="MobiDB-lite"/>
    </source>
</evidence>
<feature type="signal peptide" evidence="2">
    <location>
        <begin position="1"/>
        <end status="unknown"/>
    </location>
</feature>
<feature type="chain" id="PRO_0000022688" description="Wall-associated protein">
    <location>
        <begin status="unknown"/>
        <end position="254"/>
    </location>
</feature>
<feature type="region of interest" description="Disordered" evidence="3">
    <location>
        <begin position="25"/>
        <end position="46"/>
    </location>
</feature>
<keyword id="KW-0134">Cell wall</keyword>
<keyword id="KW-0677">Repeat</keyword>
<keyword id="KW-0964">Secreted</keyword>
<keyword id="KW-0732">Signal</keyword>
<comment type="subcellular location">
    <subcellularLocation>
        <location evidence="1">Secreted</location>
        <location evidence="1">Cell wall</location>
    </subcellularLocation>
</comment>
<proteinExistence type="inferred from homology"/>
<name>WAPA_GEOSE</name>
<accession>P42018</accession>
<organism>
    <name type="scientific">Geobacillus stearothermophilus</name>
    <name type="common">Bacillus stearothermophilus</name>
    <dbReference type="NCBI Taxonomy" id="1422"/>
    <lineage>
        <taxon>Bacteria</taxon>
        <taxon>Bacillati</taxon>
        <taxon>Bacillota</taxon>
        <taxon>Bacilli</taxon>
        <taxon>Bacillales</taxon>
        <taxon>Anoxybacillaceae</taxon>
        <taxon>Geobacillus</taxon>
    </lineage>
</organism>
<sequence>MVVWALVMPSVPTKGLAETIRSGIDRVEPKEEPPKVPQAPKRDLKPGEIIEERTENTKVYYNGDGTFTKKIYFEPIHVKKKGQKIFEEVSSSLTDSTNNTNYVETENTILETNFYKKMVDGEYANFHYNGYSISYSILEAAGNDVQSIKAKDVAAVYKKKDNKILHKNIFPSIDLQNITFNESTKEDLVLHSVGYHIFKFRLKTDLQADIQDDGSILLTNQEHEKVFELPKPFMVDSNVDEHSGEVQRLRECNV</sequence>
<dbReference type="EMBL" id="U12340">
    <property type="protein sequence ID" value="AAA86051.1"/>
    <property type="molecule type" value="Genomic_DNA"/>
</dbReference>
<dbReference type="GO" id="GO:0005576">
    <property type="term" value="C:extracellular region"/>
    <property type="evidence" value="ECO:0007669"/>
    <property type="project" value="UniProtKB-KW"/>
</dbReference>
<gene>
    <name type="primary">wapA'</name>
</gene>
<protein>
    <recommendedName>
        <fullName>Wall-associated protein</fullName>
    </recommendedName>
</protein>